<protein>
    <recommendedName>
        <fullName evidence="1">Large ribosomal subunit protein uL10</fullName>
    </recommendedName>
    <alternativeName>
        <fullName evidence="2">50S ribosomal protein L10</fullName>
    </alternativeName>
</protein>
<feature type="chain" id="PRO_1000005522" description="Large ribosomal subunit protein uL10">
    <location>
        <begin position="1"/>
        <end position="167"/>
    </location>
</feature>
<dbReference type="EMBL" id="CP000233">
    <property type="protein sequence ID" value="ABE00045.1"/>
    <property type="molecule type" value="Genomic_DNA"/>
</dbReference>
<dbReference type="RefSeq" id="WP_003700677.1">
    <property type="nucleotide sequence ID" value="NC_007929.1"/>
</dbReference>
<dbReference type="RefSeq" id="YP_536128.1">
    <property type="nucleotide sequence ID" value="NC_007929.1"/>
</dbReference>
<dbReference type="SMR" id="Q1WST4"/>
<dbReference type="STRING" id="362948.LSL_1238"/>
<dbReference type="KEGG" id="lsl:LSL_1238"/>
<dbReference type="PATRIC" id="fig|362948.14.peg.1312"/>
<dbReference type="HOGENOM" id="CLU_092227_2_0_9"/>
<dbReference type="OrthoDB" id="9808307at2"/>
<dbReference type="Proteomes" id="UP000006559">
    <property type="component" value="Chromosome"/>
</dbReference>
<dbReference type="GO" id="GO:0015934">
    <property type="term" value="C:large ribosomal subunit"/>
    <property type="evidence" value="ECO:0007669"/>
    <property type="project" value="InterPro"/>
</dbReference>
<dbReference type="GO" id="GO:0070180">
    <property type="term" value="F:large ribosomal subunit rRNA binding"/>
    <property type="evidence" value="ECO:0007669"/>
    <property type="project" value="UniProtKB-UniRule"/>
</dbReference>
<dbReference type="GO" id="GO:0003735">
    <property type="term" value="F:structural constituent of ribosome"/>
    <property type="evidence" value="ECO:0007669"/>
    <property type="project" value="InterPro"/>
</dbReference>
<dbReference type="GO" id="GO:0006412">
    <property type="term" value="P:translation"/>
    <property type="evidence" value="ECO:0007669"/>
    <property type="project" value="UniProtKB-UniRule"/>
</dbReference>
<dbReference type="CDD" id="cd05797">
    <property type="entry name" value="Ribosomal_L10"/>
    <property type="match status" value="1"/>
</dbReference>
<dbReference type="FunFam" id="3.30.70.1730:FF:000001">
    <property type="entry name" value="50S ribosomal protein L10"/>
    <property type="match status" value="1"/>
</dbReference>
<dbReference type="Gene3D" id="3.30.70.1730">
    <property type="match status" value="1"/>
</dbReference>
<dbReference type="Gene3D" id="6.10.250.290">
    <property type="match status" value="1"/>
</dbReference>
<dbReference type="HAMAP" id="MF_00362">
    <property type="entry name" value="Ribosomal_uL10"/>
    <property type="match status" value="1"/>
</dbReference>
<dbReference type="InterPro" id="IPR001790">
    <property type="entry name" value="Ribosomal_uL10"/>
</dbReference>
<dbReference type="InterPro" id="IPR043141">
    <property type="entry name" value="Ribosomal_uL10-like_sf"/>
</dbReference>
<dbReference type="InterPro" id="IPR022973">
    <property type="entry name" value="Ribosomal_uL10_bac"/>
</dbReference>
<dbReference type="InterPro" id="IPR047865">
    <property type="entry name" value="Ribosomal_uL10_bac_type"/>
</dbReference>
<dbReference type="InterPro" id="IPR002363">
    <property type="entry name" value="Ribosomal_uL10_CS_bac"/>
</dbReference>
<dbReference type="NCBIfam" id="NF000955">
    <property type="entry name" value="PRK00099.1-1"/>
    <property type="match status" value="1"/>
</dbReference>
<dbReference type="PANTHER" id="PTHR11560">
    <property type="entry name" value="39S RIBOSOMAL PROTEIN L10, MITOCHONDRIAL"/>
    <property type="match status" value="1"/>
</dbReference>
<dbReference type="Pfam" id="PF00466">
    <property type="entry name" value="Ribosomal_L10"/>
    <property type="match status" value="1"/>
</dbReference>
<dbReference type="SUPFAM" id="SSF160369">
    <property type="entry name" value="Ribosomal protein L10-like"/>
    <property type="match status" value="1"/>
</dbReference>
<dbReference type="PROSITE" id="PS01109">
    <property type="entry name" value="RIBOSOMAL_L10"/>
    <property type="match status" value="1"/>
</dbReference>
<comment type="function">
    <text evidence="1">Forms part of the ribosomal stalk, playing a central role in the interaction of the ribosome with GTP-bound translation factors.</text>
</comment>
<comment type="subunit">
    <text evidence="1">Part of the ribosomal stalk of the 50S ribosomal subunit. The N-terminus interacts with L11 and the large rRNA to form the base of the stalk. The C-terminus forms an elongated spine to which L12 dimers bind in a sequential fashion forming a multimeric L10(L12)X complex.</text>
</comment>
<comment type="similarity">
    <text evidence="1">Belongs to the universal ribosomal protein uL10 family.</text>
</comment>
<organism>
    <name type="scientific">Ligilactobacillus salivarius (strain UCC118)</name>
    <name type="common">Lactobacillus salivarius</name>
    <dbReference type="NCBI Taxonomy" id="362948"/>
    <lineage>
        <taxon>Bacteria</taxon>
        <taxon>Bacillati</taxon>
        <taxon>Bacillota</taxon>
        <taxon>Bacilli</taxon>
        <taxon>Lactobacillales</taxon>
        <taxon>Lactobacillaceae</taxon>
        <taxon>Ligilactobacillus</taxon>
    </lineage>
</organism>
<evidence type="ECO:0000255" key="1">
    <source>
        <dbReference type="HAMAP-Rule" id="MF_00362"/>
    </source>
</evidence>
<evidence type="ECO:0000305" key="2"/>
<proteinExistence type="inferred from homology"/>
<gene>
    <name evidence="1" type="primary">rplJ</name>
    <name type="ordered locus">LSL_1238</name>
</gene>
<sequence>MSKEIIAKKAAIVEEVFEKFQSASSVVVVDYRGLTVEEVTDLRKQLREAGVEMRVIKNTFLKRAADKAGYEGLDDTFSGPTAVAFGGEDITAPARIMAKFAEDHEALEIKGGMIEGKIASLEEINALAKLPNRDGLLSMLLSVLQAPVRNFAYAVKAVADSKDEDAA</sequence>
<name>RL10_LIGS1</name>
<reference key="1">
    <citation type="journal article" date="2006" name="Proc. Natl. Acad. Sci. U.S.A.">
        <title>Multireplicon genome architecture of Lactobacillus salivarius.</title>
        <authorList>
            <person name="Claesson M.J."/>
            <person name="Li Y."/>
            <person name="Leahy S."/>
            <person name="Canchaya C."/>
            <person name="van Pijkeren J.P."/>
            <person name="Cerdeno-Tarraga A.M."/>
            <person name="Parkhill J."/>
            <person name="Flynn S."/>
            <person name="O'Sullivan G.C."/>
            <person name="Collins J.K."/>
            <person name="Higgins D."/>
            <person name="Shanahan F."/>
            <person name="Fitzgerald G.F."/>
            <person name="van Sinderen D."/>
            <person name="O'Toole P.W."/>
        </authorList>
    </citation>
    <scope>NUCLEOTIDE SEQUENCE [LARGE SCALE GENOMIC DNA]</scope>
    <source>
        <strain>UCC118</strain>
    </source>
</reference>
<accession>Q1WST4</accession>
<keyword id="KW-1185">Reference proteome</keyword>
<keyword id="KW-0687">Ribonucleoprotein</keyword>
<keyword id="KW-0689">Ribosomal protein</keyword>
<keyword id="KW-0694">RNA-binding</keyword>
<keyword id="KW-0699">rRNA-binding</keyword>